<evidence type="ECO:0000269" key="1">
    <source>
    </source>
</evidence>
<evidence type="ECO:0000303" key="2">
    <source>
    </source>
</evidence>
<evidence type="ECO:0000305" key="3"/>
<evidence type="ECO:0000305" key="4">
    <source>
    </source>
</evidence>
<evidence type="ECO:0000312" key="5">
    <source>
        <dbReference type="EMBL" id="EKF21848.1"/>
    </source>
</evidence>
<evidence type="ECO:0000312" key="6">
    <source>
        <dbReference type="EMBL" id="VCT92675.1"/>
    </source>
</evidence>
<evidence type="ECO:0007744" key="7">
    <source>
        <dbReference type="PDB" id="6G7D"/>
    </source>
</evidence>
<evidence type="ECO:0007744" key="8">
    <source>
        <dbReference type="PDB" id="6G80"/>
    </source>
</evidence>
<evidence type="ECO:0007744" key="9">
    <source>
        <dbReference type="PDB" id="6H40"/>
    </source>
</evidence>
<evidence type="ECO:0007829" key="10">
    <source>
        <dbReference type="PDB" id="6G80"/>
    </source>
</evidence>
<evidence type="ECO:0007829" key="11">
    <source>
        <dbReference type="PDB" id="6H40"/>
    </source>
</evidence>
<proteinExistence type="evidence at protein level"/>
<dbReference type="EC" id="2.1.1.365" evidence="1"/>
<dbReference type="EMBL" id="AMRA01000112">
    <property type="protein sequence ID" value="EKF21848.1"/>
    <property type="molecule type" value="Genomic_DNA"/>
</dbReference>
<dbReference type="EMBL" id="LR026975">
    <property type="protein sequence ID" value="VCT92675.1"/>
    <property type="molecule type" value="Genomic_DNA"/>
</dbReference>
<dbReference type="RefSeq" id="WP_005631133.1">
    <property type="nucleotide sequence ID" value="NZ_AMRA01000112.1"/>
</dbReference>
<dbReference type="PDB" id="6G7D">
    <property type="method" value="X-ray"/>
    <property type="resolution" value="1.35 A"/>
    <property type="chains" value="A=1-218"/>
</dbReference>
<dbReference type="PDB" id="6G80">
    <property type="method" value="X-ray"/>
    <property type="resolution" value="2.05 A"/>
    <property type="chains" value="A/B/C/M=1-218"/>
</dbReference>
<dbReference type="PDB" id="6H40">
    <property type="method" value="X-ray"/>
    <property type="resolution" value="1.05 A"/>
    <property type="chains" value="A=1-218"/>
</dbReference>
<dbReference type="PDBsum" id="6G7D"/>
<dbReference type="PDBsum" id="6G80"/>
<dbReference type="PDBsum" id="6H40"/>
<dbReference type="SASBDB" id="K5B7F3"/>
<dbReference type="SMR" id="K5B7F3"/>
<dbReference type="STRING" id="1122247.GCA_000379865_01287"/>
<dbReference type="KEGG" id="mhas:MHAS_04405"/>
<dbReference type="PATRIC" id="fig|1122247.3.peg.3993"/>
<dbReference type="eggNOG" id="COG4122">
    <property type="taxonomic scope" value="Bacteria"/>
</dbReference>
<dbReference type="OrthoDB" id="240750at2"/>
<dbReference type="BioCyc" id="MetaCyc:MONOMER-21025"/>
<dbReference type="BRENDA" id="2.1.1.365">
    <property type="organism ID" value="15810"/>
</dbReference>
<dbReference type="Proteomes" id="UP000006265">
    <property type="component" value="Unassembled WGS sequence"/>
</dbReference>
<dbReference type="GO" id="GO:0005886">
    <property type="term" value="C:plasma membrane"/>
    <property type="evidence" value="ECO:0007669"/>
    <property type="project" value="TreeGrafter"/>
</dbReference>
<dbReference type="GO" id="GO:0046872">
    <property type="term" value="F:metal ion binding"/>
    <property type="evidence" value="ECO:0007669"/>
    <property type="project" value="UniProtKB-KW"/>
</dbReference>
<dbReference type="GO" id="GO:0008168">
    <property type="term" value="F:methyltransferase activity"/>
    <property type="evidence" value="ECO:0007669"/>
    <property type="project" value="UniProtKB-KW"/>
</dbReference>
<dbReference type="GO" id="GO:0071770">
    <property type="term" value="P:DIM/DIP cell wall layer assembly"/>
    <property type="evidence" value="ECO:0007669"/>
    <property type="project" value="TreeGrafter"/>
</dbReference>
<dbReference type="GO" id="GO:0032259">
    <property type="term" value="P:methylation"/>
    <property type="evidence" value="ECO:0007669"/>
    <property type="project" value="UniProtKB-KW"/>
</dbReference>
<dbReference type="Gene3D" id="3.40.50.150">
    <property type="entry name" value="Vaccinia Virus protein VP39"/>
    <property type="match status" value="1"/>
</dbReference>
<dbReference type="InterPro" id="IPR029063">
    <property type="entry name" value="SAM-dependent_MTases_sf"/>
</dbReference>
<dbReference type="PANTHER" id="PTHR40048">
    <property type="entry name" value="RHAMNOSYL O-METHYLTRANSFERASE"/>
    <property type="match status" value="1"/>
</dbReference>
<dbReference type="PANTHER" id="PTHR40048:SF1">
    <property type="entry name" value="RHAMNOSYL O-METHYLTRANSFERASE"/>
    <property type="match status" value="1"/>
</dbReference>
<dbReference type="Pfam" id="PF13578">
    <property type="entry name" value="Methyltransf_24"/>
    <property type="match status" value="1"/>
</dbReference>
<dbReference type="SUPFAM" id="SSF53335">
    <property type="entry name" value="S-adenosyl-L-methionine-dependent methyltransferases"/>
    <property type="match status" value="1"/>
</dbReference>
<gene>
    <name evidence="2" type="primary">meT1</name>
    <name evidence="5" type="ORF">C731_4163</name>
    <name evidence="6" type="ORF">MHAS_04405</name>
</gene>
<name>MET1_MYCHD</name>
<comment type="function">
    <text evidence="1">Involved in the biosynthesis of 3-O-methylmannose polysaccharides (MMP), which are intracellular polymethylated polysaccharides implicated in the modulation of fatty acid metabolism in non-tuberculous mycobacteria (PubMed:30606802). Specifically methylates the 1-OH position of 3,3'-di-O-methyl-4alpha-mannobiose, a probable early precursor of MMP, yielding the reducing end dimannoside of MMP (PubMed:30606802).</text>
</comment>
<comment type="catalytic activity">
    <reaction evidence="1">
        <text>3,3'-di-O-methyl-4alpha-mannobiose + S-adenosyl-L-methionine = 1,3,3'-tri-O-methyl-4alpha-mannobiose + S-adenosyl-L-homocysteine + H(+)</text>
        <dbReference type="Rhea" id="RHEA:62408"/>
        <dbReference type="ChEBI" id="CHEBI:15378"/>
        <dbReference type="ChEBI" id="CHEBI:57856"/>
        <dbReference type="ChEBI" id="CHEBI:59789"/>
        <dbReference type="ChEBI" id="CHEBI:145745"/>
        <dbReference type="ChEBI" id="CHEBI:145746"/>
        <dbReference type="EC" id="2.1.1.365"/>
    </reaction>
    <physiologicalReaction direction="left-to-right" evidence="1">
        <dbReference type="Rhea" id="RHEA:62409"/>
    </physiologicalReaction>
</comment>
<comment type="cofactor">
    <cofactor evidence="1">
        <name>Mg(2+)</name>
        <dbReference type="ChEBI" id="CHEBI:18420"/>
    </cofactor>
</comment>
<comment type="activity regulation">
    <text evidence="1">Inhibited by EDTA.</text>
</comment>
<comment type="biophysicochemical properties">
    <kinetics>
        <KM evidence="1">0.25 mM for 3,3'-di-O-methyl-4alpha-mannobiose</KM>
        <KM evidence="1">0.055 mM for S-adenosyl-L-methionine</KM>
        <Vmax evidence="1">75.0 nmol/min/mg enzyme toward 3,3'-di-O-methyl-4alpha-mannobiose</Vmax>
        <Vmax evidence="1">85.0 nmol/min/mg enzyme toward S-adenosyl-L-methionine</Vmax>
        <text evidence="1">kcat is 0.037 min(-1).</text>
    </kinetics>
    <phDependence>
        <text evidence="1">Optimum pH is 7.5.</text>
    </phDependence>
    <temperatureDependence>
        <text evidence="1">Optimum temperature is 50-55 degrees Celsius.</text>
    </temperatureDependence>
</comment>
<comment type="subunit">
    <text evidence="1">Homodimer.</text>
</comment>
<comment type="similarity">
    <text evidence="3">Belongs to the methyltransferase superfamily.</text>
</comment>
<sequence>MTDIRDTDALFALADRVTGFMPADEGRTLYETAVRYLGDGVGVEIGTYCGKSTVLLGAAARQTGGVVFTVDHHHGSEEHQPGWEYHDPSLVDPVTGLFDTLPRLRHTLDEADLYDHVVAVVGKSAVVARGWRTPLRFLFIDGGHTEEAAQRDFDGWARWVEVGGALVIHDVFPDPKDGGQAPFHIYQRALNTGDFREVNAYGSMRVLERTSGIAGQPL</sequence>
<reference key="1">
    <citation type="journal article" date="2012" name="J. Bacteriol.">
        <title>Genome sequence of Mycobacterium hassiacum DSM 44199, a rare source of heat-stable mycobacterial proteins.</title>
        <authorList>
            <person name="Tiago I."/>
            <person name="Maranha A."/>
            <person name="Mendes V."/>
            <person name="Alarico S."/>
            <person name="Moynihan P.J."/>
            <person name="Clarke A.J."/>
            <person name="Macedo-Ribeiro S."/>
            <person name="Pereira P.J."/>
            <person name="Empadinhas N."/>
        </authorList>
    </citation>
    <scope>NUCLEOTIDE SEQUENCE [LARGE SCALE GENOMIC DNA]</scope>
    <source>
        <strain>DSM 44199 / CIP 105218 / JCM 12690 / 3849</strain>
    </source>
</reference>
<reference key="2">
    <citation type="journal article" date="2019" name="Microbiol. Resour. Announc.">
        <title>Complete genome sequence of Mycolicibacterium hassiacum DSM 44199.</title>
        <authorList>
            <person name="Sanchez M."/>
            <person name="Blesa A."/>
            <person name="Sacristan-Horcajada E."/>
            <person name="Berenguer J."/>
        </authorList>
    </citation>
    <scope>NUCLEOTIDE SEQUENCE [LARGE SCALE GENOMIC DNA]</scope>
    <source>
        <strain>DSM 44199 / CIP 105218 / JCM 12690 / 3849</strain>
    </source>
</reference>
<reference evidence="7 8 9" key="3">
    <citation type="journal article" date="2019" name="Proc. Natl. Acad. Sci. U.S.A.">
        <title>Biosynthesis of mycobacterial methylmannose polysaccharides requires a unique 1-O-methyltransferase specific for 3-O-methylated mannosides.</title>
        <authorList>
            <person name="Ripoll-Rozada J."/>
            <person name="Costa M."/>
            <person name="Manso J.A."/>
            <person name="Maranha A."/>
            <person name="Miranda V."/>
            <person name="Sequeira A."/>
            <person name="Ventura M.R."/>
            <person name="Macedo-Ribeiro S."/>
            <person name="Pereira P.J.B."/>
            <person name="Empadinhas N."/>
        </authorList>
    </citation>
    <scope>X-RAY CRYSTALLOGRAPHY (1.05 ANGSTROMS) IN COMPLEXES WITH S-ADENOSYL-L-HOMOCYSTEINE AND MAGNESIUM ION</scope>
    <scope>FUNCTION</scope>
    <scope>CATALYTIC ACTIVITY</scope>
    <scope>COFACTOR</scope>
    <scope>ACTIVITY REGULATION</scope>
    <scope>BIOPHYSICOCHEMICAL PROPERTIES</scope>
    <scope>SUBUNIT</scope>
    <scope>ACTIVE SITE</scope>
    <scope>MUTAGENESIS OF GLU-78; HIS-79 AND HIS-144</scope>
</reference>
<accession>K5B7F3</accession>
<organism>
    <name type="scientific">Mycolicibacterium hassiacum (strain DSM 44199 / CIP 105218 / JCM 12690 / 3849)</name>
    <name type="common">Mycobacterium hassiacum</name>
    <dbReference type="NCBI Taxonomy" id="1122247"/>
    <lineage>
        <taxon>Bacteria</taxon>
        <taxon>Bacillati</taxon>
        <taxon>Actinomycetota</taxon>
        <taxon>Actinomycetes</taxon>
        <taxon>Mycobacteriales</taxon>
        <taxon>Mycobacteriaceae</taxon>
        <taxon>Mycolicibacterium</taxon>
    </lineage>
</organism>
<protein>
    <recommendedName>
        <fullName evidence="3">MMP 1-O-methyltransferase</fullName>
        <ecNumber evidence="1">2.1.1.365</ecNumber>
    </recommendedName>
    <alternativeName>
        <fullName evidence="3">3-O-methylmannose polysaccharide 1-O-methyltransferase</fullName>
    </alternativeName>
</protein>
<feature type="chain" id="PRO_0000452108" description="MMP 1-O-methyltransferase">
    <location>
        <begin position="1"/>
        <end position="218"/>
    </location>
</feature>
<feature type="active site" description="Proton acceptor" evidence="4">
    <location>
        <position position="144"/>
    </location>
</feature>
<feature type="binding site" evidence="4">
    <location>
        <position position="20"/>
    </location>
    <ligand>
        <name>S-adenosyl-L-methionine</name>
        <dbReference type="ChEBI" id="CHEBI:59789"/>
    </ligand>
</feature>
<feature type="binding site" evidence="4">
    <location>
        <position position="46"/>
    </location>
    <ligand>
        <name>S-adenosyl-L-methionine</name>
        <dbReference type="ChEBI" id="CHEBI:59789"/>
    </ligand>
</feature>
<feature type="binding site" evidence="4">
    <location>
        <position position="52"/>
    </location>
    <ligand>
        <name>S-adenosyl-L-methionine</name>
        <dbReference type="ChEBI" id="CHEBI:59789"/>
    </ligand>
</feature>
<feature type="binding site" evidence="4">
    <location>
        <position position="71"/>
    </location>
    <ligand>
        <name>S-adenosyl-L-methionine</name>
        <dbReference type="ChEBI" id="CHEBI:59789"/>
    </ligand>
</feature>
<feature type="binding site" evidence="4">
    <location>
        <position position="75"/>
    </location>
    <ligand>
        <name>S-adenosyl-L-methionine</name>
        <dbReference type="ChEBI" id="CHEBI:59789"/>
    </ligand>
</feature>
<feature type="binding site" evidence="4">
    <location>
        <position position="124"/>
    </location>
    <ligand>
        <name>S-adenosyl-L-methionine</name>
        <dbReference type="ChEBI" id="CHEBI:59789"/>
    </ligand>
</feature>
<feature type="binding site" evidence="1">
    <location>
        <position position="141"/>
    </location>
    <ligand>
        <name>Mg(2+)</name>
        <dbReference type="ChEBI" id="CHEBI:18420"/>
    </ligand>
</feature>
<feature type="binding site" evidence="4">
    <location>
        <position position="151"/>
    </location>
    <ligand>
        <name>S-adenosyl-L-methionine</name>
        <dbReference type="ChEBI" id="CHEBI:59789"/>
    </ligand>
</feature>
<feature type="binding site" evidence="1">
    <location>
        <position position="169"/>
    </location>
    <ligand>
        <name>Mg(2+)</name>
        <dbReference type="ChEBI" id="CHEBI:18420"/>
    </ligand>
</feature>
<feature type="binding site" evidence="1">
    <location>
        <position position="170"/>
    </location>
    <ligand>
        <name>Mg(2+)</name>
        <dbReference type="ChEBI" id="CHEBI:18420"/>
    </ligand>
</feature>
<feature type="mutagenesis site" description="87% decrease in activity. Decreases affinity for both 3,3-dimethylmannobiose and S-adenosyl-L-methionine." evidence="1">
    <original>E</original>
    <variation>A</variation>
    <location>
        <position position="78"/>
    </location>
</feature>
<feature type="mutagenesis site" description="85% decrease in activity. Decreases affinity for both 3,3-dimethylmannobiose and S-adenosyl-L-methionine." evidence="1">
    <original>H</original>
    <variation>A</variation>
    <location>
        <position position="79"/>
    </location>
</feature>
<feature type="mutagenesis site" description="Loss of activity. Slightly affects the affinity for S-adenosyl-L-methionine." evidence="1">
    <original>H</original>
    <variation>A</variation>
    <location>
        <position position="144"/>
    </location>
</feature>
<feature type="helix" evidence="11">
    <location>
        <begin position="6"/>
        <end position="16"/>
    </location>
</feature>
<feature type="helix" evidence="11">
    <location>
        <begin position="23"/>
        <end position="36"/>
    </location>
</feature>
<feature type="strand" evidence="11">
    <location>
        <begin position="40"/>
        <end position="45"/>
    </location>
</feature>
<feature type="helix" evidence="11">
    <location>
        <begin position="51"/>
        <end position="63"/>
    </location>
</feature>
<feature type="strand" evidence="11">
    <location>
        <begin position="66"/>
        <end position="71"/>
    </location>
</feature>
<feature type="helix" evidence="11">
    <location>
        <begin position="77"/>
        <end position="79"/>
    </location>
</feature>
<feature type="strand" evidence="10">
    <location>
        <begin position="82"/>
        <end position="86"/>
    </location>
</feature>
<feature type="helix" evidence="11">
    <location>
        <begin position="88"/>
        <end position="90"/>
    </location>
</feature>
<feature type="turn" evidence="11">
    <location>
        <begin position="93"/>
        <end position="95"/>
    </location>
</feature>
<feature type="helix" evidence="11">
    <location>
        <begin position="101"/>
        <end position="111"/>
    </location>
</feature>
<feature type="turn" evidence="11">
    <location>
        <begin position="114"/>
        <end position="116"/>
    </location>
</feature>
<feature type="strand" evidence="11">
    <location>
        <begin position="117"/>
        <end position="122"/>
    </location>
</feature>
<feature type="helix" evidence="11">
    <location>
        <begin position="124"/>
        <end position="129"/>
    </location>
</feature>
<feature type="strand" evidence="11">
    <location>
        <begin position="135"/>
        <end position="140"/>
    </location>
</feature>
<feature type="helix" evidence="11">
    <location>
        <begin position="146"/>
        <end position="156"/>
    </location>
</feature>
<feature type="helix" evidence="11">
    <location>
        <begin position="157"/>
        <end position="159"/>
    </location>
</feature>
<feature type="strand" evidence="11">
    <location>
        <begin position="160"/>
        <end position="168"/>
    </location>
</feature>
<feature type="turn" evidence="11">
    <location>
        <begin position="175"/>
        <end position="177"/>
    </location>
</feature>
<feature type="helix" evidence="11">
    <location>
        <begin position="181"/>
        <end position="191"/>
    </location>
</feature>
<feature type="strand" evidence="11">
    <location>
        <begin position="193"/>
        <end position="201"/>
    </location>
</feature>
<feature type="strand" evidence="11">
    <location>
        <begin position="204"/>
        <end position="209"/>
    </location>
</feature>
<keyword id="KW-0002">3D-structure</keyword>
<keyword id="KW-0119">Carbohydrate metabolism</keyword>
<keyword id="KW-0460">Magnesium</keyword>
<keyword id="KW-0479">Metal-binding</keyword>
<keyword id="KW-0489">Methyltransferase</keyword>
<keyword id="KW-1185">Reference proteome</keyword>
<keyword id="KW-0949">S-adenosyl-L-methionine</keyword>
<keyword id="KW-0808">Transferase</keyword>